<protein>
    <recommendedName>
        <fullName evidence="1">Bifunctional protein PyrR</fullName>
    </recommendedName>
    <domain>
        <recommendedName>
            <fullName evidence="1">Pyrimidine operon regulatory protein</fullName>
        </recommendedName>
    </domain>
    <domain>
        <recommendedName>
            <fullName evidence="1">Uracil phosphoribosyltransferase</fullName>
            <shortName evidence="1">UPRTase</shortName>
            <ecNumber evidence="1">2.4.2.9</ecNumber>
        </recommendedName>
    </domain>
</protein>
<sequence>MGKEVFLLDDQGIKRALTRIAHEIIEKNKGAKDIILVGIRTRGVPLAKRLAQRIDQIEGEIVPVGMLDITLYRDDLTKDENDPIVHGSSIDSEINDKIVILVDDVLYTGRTARAALDALVDLGRPKMVQLAVLIDRGHRELPIRADYVGKNVPTSKEEIVRVSLMEIDKKDSVMLEGSKNVV</sequence>
<accession>A6TRX7</accession>
<gene>
    <name evidence="1" type="primary">pyrR</name>
    <name type="ordered locus">Amet_2795</name>
</gene>
<organism>
    <name type="scientific">Alkaliphilus metalliredigens (strain QYMF)</name>
    <dbReference type="NCBI Taxonomy" id="293826"/>
    <lineage>
        <taxon>Bacteria</taxon>
        <taxon>Bacillati</taxon>
        <taxon>Bacillota</taxon>
        <taxon>Clostridia</taxon>
        <taxon>Peptostreptococcales</taxon>
        <taxon>Natronincolaceae</taxon>
        <taxon>Alkaliphilus</taxon>
    </lineage>
</organism>
<dbReference type="EC" id="2.4.2.9" evidence="1"/>
<dbReference type="EMBL" id="CP000724">
    <property type="protein sequence ID" value="ABR48945.1"/>
    <property type="molecule type" value="Genomic_DNA"/>
</dbReference>
<dbReference type="RefSeq" id="WP_012063916.1">
    <property type="nucleotide sequence ID" value="NC_009633.1"/>
</dbReference>
<dbReference type="SMR" id="A6TRX7"/>
<dbReference type="STRING" id="293826.Amet_2795"/>
<dbReference type="KEGG" id="amt:Amet_2795"/>
<dbReference type="eggNOG" id="COG2065">
    <property type="taxonomic scope" value="Bacteria"/>
</dbReference>
<dbReference type="HOGENOM" id="CLU_094234_2_1_9"/>
<dbReference type="OrthoDB" id="9802227at2"/>
<dbReference type="Proteomes" id="UP000001572">
    <property type="component" value="Chromosome"/>
</dbReference>
<dbReference type="GO" id="GO:0003723">
    <property type="term" value="F:RNA binding"/>
    <property type="evidence" value="ECO:0007669"/>
    <property type="project" value="UniProtKB-UniRule"/>
</dbReference>
<dbReference type="GO" id="GO:0004845">
    <property type="term" value="F:uracil phosphoribosyltransferase activity"/>
    <property type="evidence" value="ECO:0007669"/>
    <property type="project" value="UniProtKB-UniRule"/>
</dbReference>
<dbReference type="GO" id="GO:0006353">
    <property type="term" value="P:DNA-templated transcription termination"/>
    <property type="evidence" value="ECO:0007669"/>
    <property type="project" value="UniProtKB-UniRule"/>
</dbReference>
<dbReference type="CDD" id="cd06223">
    <property type="entry name" value="PRTases_typeI"/>
    <property type="match status" value="1"/>
</dbReference>
<dbReference type="FunFam" id="3.40.50.2020:FF:000020">
    <property type="entry name" value="Bifunctional protein PyrR"/>
    <property type="match status" value="1"/>
</dbReference>
<dbReference type="Gene3D" id="3.40.50.2020">
    <property type="match status" value="1"/>
</dbReference>
<dbReference type="HAMAP" id="MF_01219">
    <property type="entry name" value="PyrR"/>
    <property type="match status" value="1"/>
</dbReference>
<dbReference type="InterPro" id="IPR000836">
    <property type="entry name" value="PRibTrfase_dom"/>
</dbReference>
<dbReference type="InterPro" id="IPR029057">
    <property type="entry name" value="PRTase-like"/>
</dbReference>
<dbReference type="InterPro" id="IPR023050">
    <property type="entry name" value="PyrR"/>
</dbReference>
<dbReference type="InterPro" id="IPR050137">
    <property type="entry name" value="PyrR_bifunctional"/>
</dbReference>
<dbReference type="NCBIfam" id="NF003547">
    <property type="entry name" value="PRK05205.1-3"/>
    <property type="match status" value="1"/>
</dbReference>
<dbReference type="NCBIfam" id="NF003548">
    <property type="entry name" value="PRK05205.1-4"/>
    <property type="match status" value="1"/>
</dbReference>
<dbReference type="NCBIfam" id="NF003549">
    <property type="entry name" value="PRK05205.1-5"/>
    <property type="match status" value="1"/>
</dbReference>
<dbReference type="PANTHER" id="PTHR11608">
    <property type="entry name" value="BIFUNCTIONAL PROTEIN PYRR"/>
    <property type="match status" value="1"/>
</dbReference>
<dbReference type="PANTHER" id="PTHR11608:SF0">
    <property type="entry name" value="BIFUNCTIONAL PROTEIN PYRR"/>
    <property type="match status" value="1"/>
</dbReference>
<dbReference type="Pfam" id="PF00156">
    <property type="entry name" value="Pribosyltran"/>
    <property type="match status" value="1"/>
</dbReference>
<dbReference type="SUPFAM" id="SSF53271">
    <property type="entry name" value="PRTase-like"/>
    <property type="match status" value="1"/>
</dbReference>
<reference key="1">
    <citation type="journal article" date="2016" name="Genome Announc.">
        <title>Complete genome sequence of Alkaliphilus metalliredigens strain QYMF, an alkaliphilic and metal-reducing bacterium isolated from borax-contaminated leachate ponds.</title>
        <authorList>
            <person name="Hwang C."/>
            <person name="Copeland A."/>
            <person name="Lucas S."/>
            <person name="Lapidus A."/>
            <person name="Barry K."/>
            <person name="Detter J.C."/>
            <person name="Glavina Del Rio T."/>
            <person name="Hammon N."/>
            <person name="Israni S."/>
            <person name="Dalin E."/>
            <person name="Tice H."/>
            <person name="Pitluck S."/>
            <person name="Chertkov O."/>
            <person name="Brettin T."/>
            <person name="Bruce D."/>
            <person name="Han C."/>
            <person name="Schmutz J."/>
            <person name="Larimer F."/>
            <person name="Land M.L."/>
            <person name="Hauser L."/>
            <person name="Kyrpides N."/>
            <person name="Mikhailova N."/>
            <person name="Ye Q."/>
            <person name="Zhou J."/>
            <person name="Richardson P."/>
            <person name="Fields M.W."/>
        </authorList>
    </citation>
    <scope>NUCLEOTIDE SEQUENCE [LARGE SCALE GENOMIC DNA]</scope>
    <source>
        <strain>QYMF</strain>
    </source>
</reference>
<proteinExistence type="inferred from homology"/>
<keyword id="KW-0328">Glycosyltransferase</keyword>
<keyword id="KW-1185">Reference proteome</keyword>
<keyword id="KW-0694">RNA-binding</keyword>
<keyword id="KW-0804">Transcription</keyword>
<keyword id="KW-0805">Transcription regulation</keyword>
<keyword id="KW-0806">Transcription termination</keyword>
<keyword id="KW-0808">Transferase</keyword>
<comment type="function">
    <text evidence="1">Regulates transcriptional attenuation of the pyrimidine nucleotide (pyr) operon by binding in a uridine-dependent manner to specific sites on pyr mRNA. This disrupts an antiterminator hairpin in the RNA and favors formation of a downstream transcription terminator, leading to a reduced expression of downstream genes.</text>
</comment>
<comment type="function">
    <text evidence="1">Also displays a weak uracil phosphoribosyltransferase activity which is not physiologically significant.</text>
</comment>
<comment type="catalytic activity">
    <reaction evidence="1">
        <text>UMP + diphosphate = 5-phospho-alpha-D-ribose 1-diphosphate + uracil</text>
        <dbReference type="Rhea" id="RHEA:13017"/>
        <dbReference type="ChEBI" id="CHEBI:17568"/>
        <dbReference type="ChEBI" id="CHEBI:33019"/>
        <dbReference type="ChEBI" id="CHEBI:57865"/>
        <dbReference type="ChEBI" id="CHEBI:58017"/>
        <dbReference type="EC" id="2.4.2.9"/>
    </reaction>
</comment>
<comment type="subunit">
    <text evidence="1">Homodimer and homohexamer; in equilibrium.</text>
</comment>
<comment type="similarity">
    <text evidence="1">Belongs to the purine/pyrimidine phosphoribosyltransferase family. PyrR subfamily.</text>
</comment>
<name>PYRR_ALKMQ</name>
<feature type="chain" id="PRO_1000066733" description="Bifunctional protein PyrR">
    <location>
        <begin position="1"/>
        <end position="182"/>
    </location>
</feature>
<feature type="short sequence motif" description="PRPP-binding" evidence="1">
    <location>
        <begin position="99"/>
        <end position="111"/>
    </location>
</feature>
<evidence type="ECO:0000255" key="1">
    <source>
        <dbReference type="HAMAP-Rule" id="MF_01219"/>
    </source>
</evidence>